<feature type="chain" id="PRO_0000290889" description="Small ribosomal subunit protein uS8">
    <location>
        <begin position="1"/>
        <end position="131"/>
    </location>
</feature>
<proteinExistence type="inferred from homology"/>
<gene>
    <name evidence="1" type="primary">rpsH</name>
    <name type="ordered locus">Neut_0572</name>
</gene>
<keyword id="KW-0687">Ribonucleoprotein</keyword>
<keyword id="KW-0689">Ribosomal protein</keyword>
<keyword id="KW-0694">RNA-binding</keyword>
<keyword id="KW-0699">rRNA-binding</keyword>
<sequence length="131" mass="14197">MCMTDPIADMLTRIRNAQAAEKKEVKIPSSKLKKAILKILKDEGYIESYQEIVSDGKLSVDICLKYFNGGPVISSLTRISKPGLRRYSSRNNLPKVMHGLGIAIVSTSKGVMTERSARAGGVGGELLCIVA</sequence>
<reference key="1">
    <citation type="journal article" date="2007" name="Environ. Microbiol.">
        <title>Whole-genome analysis of the ammonia-oxidizing bacterium, Nitrosomonas eutropha C91: implications for niche adaptation.</title>
        <authorList>
            <person name="Stein L.Y."/>
            <person name="Arp D.J."/>
            <person name="Berube P.M."/>
            <person name="Chain P.S."/>
            <person name="Hauser L."/>
            <person name="Jetten M.S."/>
            <person name="Klotz M.G."/>
            <person name="Larimer F.W."/>
            <person name="Norton J.M."/>
            <person name="Op den Camp H.J.M."/>
            <person name="Shin M."/>
            <person name="Wei X."/>
        </authorList>
    </citation>
    <scope>NUCLEOTIDE SEQUENCE [LARGE SCALE GENOMIC DNA]</scope>
    <source>
        <strain>DSM 101675 / C91 / Nm57</strain>
    </source>
</reference>
<comment type="function">
    <text evidence="1">One of the primary rRNA binding proteins, it binds directly to 16S rRNA central domain where it helps coordinate assembly of the platform of the 30S subunit.</text>
</comment>
<comment type="subunit">
    <text evidence="1">Part of the 30S ribosomal subunit. Contacts proteins S5 and S12.</text>
</comment>
<comment type="similarity">
    <text evidence="1">Belongs to the universal ribosomal protein uS8 family.</text>
</comment>
<dbReference type="EMBL" id="CP000450">
    <property type="protein sequence ID" value="ABI58844.1"/>
    <property type="molecule type" value="Genomic_DNA"/>
</dbReference>
<dbReference type="RefSeq" id="WP_011633686.1">
    <property type="nucleotide sequence ID" value="NC_008344.1"/>
</dbReference>
<dbReference type="SMR" id="Q0AII2"/>
<dbReference type="STRING" id="335283.Neut_0572"/>
<dbReference type="KEGG" id="net:Neut_0572"/>
<dbReference type="eggNOG" id="COG0096">
    <property type="taxonomic scope" value="Bacteria"/>
</dbReference>
<dbReference type="HOGENOM" id="CLU_098428_0_0_4"/>
<dbReference type="OrthoDB" id="9802617at2"/>
<dbReference type="Proteomes" id="UP000001966">
    <property type="component" value="Chromosome"/>
</dbReference>
<dbReference type="GO" id="GO:1990904">
    <property type="term" value="C:ribonucleoprotein complex"/>
    <property type="evidence" value="ECO:0007669"/>
    <property type="project" value="UniProtKB-KW"/>
</dbReference>
<dbReference type="GO" id="GO:0005840">
    <property type="term" value="C:ribosome"/>
    <property type="evidence" value="ECO:0007669"/>
    <property type="project" value="UniProtKB-KW"/>
</dbReference>
<dbReference type="GO" id="GO:0019843">
    <property type="term" value="F:rRNA binding"/>
    <property type="evidence" value="ECO:0007669"/>
    <property type="project" value="UniProtKB-UniRule"/>
</dbReference>
<dbReference type="GO" id="GO:0003735">
    <property type="term" value="F:structural constituent of ribosome"/>
    <property type="evidence" value="ECO:0007669"/>
    <property type="project" value="InterPro"/>
</dbReference>
<dbReference type="GO" id="GO:0006412">
    <property type="term" value="P:translation"/>
    <property type="evidence" value="ECO:0007669"/>
    <property type="project" value="UniProtKB-UniRule"/>
</dbReference>
<dbReference type="FunFam" id="3.30.1370.30:FF:000002">
    <property type="entry name" value="30S ribosomal protein S8"/>
    <property type="match status" value="1"/>
</dbReference>
<dbReference type="FunFam" id="3.30.1490.10:FF:000001">
    <property type="entry name" value="30S ribosomal protein S8"/>
    <property type="match status" value="1"/>
</dbReference>
<dbReference type="Gene3D" id="3.30.1370.30">
    <property type="match status" value="1"/>
</dbReference>
<dbReference type="Gene3D" id="3.30.1490.10">
    <property type="match status" value="1"/>
</dbReference>
<dbReference type="HAMAP" id="MF_01302_B">
    <property type="entry name" value="Ribosomal_uS8_B"/>
    <property type="match status" value="1"/>
</dbReference>
<dbReference type="InterPro" id="IPR000630">
    <property type="entry name" value="Ribosomal_uS8"/>
</dbReference>
<dbReference type="InterPro" id="IPR047863">
    <property type="entry name" value="Ribosomal_uS8_CS"/>
</dbReference>
<dbReference type="InterPro" id="IPR035987">
    <property type="entry name" value="Ribosomal_uS8_sf"/>
</dbReference>
<dbReference type="NCBIfam" id="NF001109">
    <property type="entry name" value="PRK00136.1"/>
    <property type="match status" value="1"/>
</dbReference>
<dbReference type="PANTHER" id="PTHR11758">
    <property type="entry name" value="40S RIBOSOMAL PROTEIN S15A"/>
    <property type="match status" value="1"/>
</dbReference>
<dbReference type="Pfam" id="PF00410">
    <property type="entry name" value="Ribosomal_S8"/>
    <property type="match status" value="1"/>
</dbReference>
<dbReference type="SUPFAM" id="SSF56047">
    <property type="entry name" value="Ribosomal protein S8"/>
    <property type="match status" value="1"/>
</dbReference>
<dbReference type="PROSITE" id="PS00053">
    <property type="entry name" value="RIBOSOMAL_S8"/>
    <property type="match status" value="1"/>
</dbReference>
<accession>Q0AII2</accession>
<evidence type="ECO:0000255" key="1">
    <source>
        <dbReference type="HAMAP-Rule" id="MF_01302"/>
    </source>
</evidence>
<evidence type="ECO:0000305" key="2"/>
<protein>
    <recommendedName>
        <fullName evidence="1">Small ribosomal subunit protein uS8</fullName>
    </recommendedName>
    <alternativeName>
        <fullName evidence="2">30S ribosomal protein S8</fullName>
    </alternativeName>
</protein>
<organism>
    <name type="scientific">Nitrosomonas eutropha (strain DSM 101675 / C91 / Nm57)</name>
    <dbReference type="NCBI Taxonomy" id="335283"/>
    <lineage>
        <taxon>Bacteria</taxon>
        <taxon>Pseudomonadati</taxon>
        <taxon>Pseudomonadota</taxon>
        <taxon>Betaproteobacteria</taxon>
        <taxon>Nitrosomonadales</taxon>
        <taxon>Nitrosomonadaceae</taxon>
        <taxon>Nitrosomonas</taxon>
    </lineage>
</organism>
<name>RS8_NITEC</name>